<accession>Q8I0K7</accession>
<gene>
    <name type="primary">KIM2</name>
</gene>
<dbReference type="EMBL" id="AF459791">
    <property type="protein sequence ID" value="AAN59782.1"/>
    <property type="molecule type" value="Genomic_DNA"/>
</dbReference>
<dbReference type="EMBL" id="AF459792">
    <property type="protein sequence ID" value="AAN59783.1"/>
    <property type="molecule type" value="mRNA"/>
</dbReference>
<dbReference type="SMR" id="Q8I0K7"/>
<dbReference type="GO" id="GO:0005576">
    <property type="term" value="C:extracellular region"/>
    <property type="evidence" value="ECO:0007669"/>
    <property type="project" value="UniProtKB-SubCell"/>
</dbReference>
<dbReference type="GO" id="GO:0019871">
    <property type="term" value="F:sodium channel inhibitor activity"/>
    <property type="evidence" value="ECO:0007669"/>
    <property type="project" value="InterPro"/>
</dbReference>
<dbReference type="GO" id="GO:0090729">
    <property type="term" value="F:toxin activity"/>
    <property type="evidence" value="ECO:0007669"/>
    <property type="project" value="UniProtKB-KW"/>
</dbReference>
<dbReference type="GO" id="GO:0006952">
    <property type="term" value="P:defense response"/>
    <property type="evidence" value="ECO:0007669"/>
    <property type="project" value="InterPro"/>
</dbReference>
<dbReference type="CDD" id="cd23106">
    <property type="entry name" value="neurotoxins_LC_scorpion"/>
    <property type="match status" value="1"/>
</dbReference>
<dbReference type="FunFam" id="3.30.30.10:FF:000002">
    <property type="entry name" value="Alpha-like toxin BmK-M1"/>
    <property type="match status" value="1"/>
</dbReference>
<dbReference type="Gene3D" id="3.30.30.10">
    <property type="entry name" value="Knottin, scorpion toxin-like"/>
    <property type="match status" value="1"/>
</dbReference>
<dbReference type="InterPro" id="IPR044062">
    <property type="entry name" value="LCN-type_CS_alpha_beta_dom"/>
</dbReference>
<dbReference type="InterPro" id="IPR003614">
    <property type="entry name" value="Scorpion_toxin-like"/>
</dbReference>
<dbReference type="InterPro" id="IPR036574">
    <property type="entry name" value="Scorpion_toxin-like_sf"/>
</dbReference>
<dbReference type="InterPro" id="IPR018218">
    <property type="entry name" value="Scorpion_toxinL"/>
</dbReference>
<dbReference type="InterPro" id="IPR002061">
    <property type="entry name" value="Scorpion_toxinL/defensin"/>
</dbReference>
<dbReference type="Pfam" id="PF00537">
    <property type="entry name" value="Toxin_3"/>
    <property type="match status" value="1"/>
</dbReference>
<dbReference type="PRINTS" id="PR00285">
    <property type="entry name" value="SCORPNTOXIN"/>
</dbReference>
<dbReference type="SMART" id="SM00505">
    <property type="entry name" value="Knot1"/>
    <property type="match status" value="1"/>
</dbReference>
<dbReference type="SUPFAM" id="SSF57095">
    <property type="entry name" value="Scorpion toxin-like"/>
    <property type="match status" value="1"/>
</dbReference>
<dbReference type="PROSITE" id="PS51863">
    <property type="entry name" value="LCN_CSAB"/>
    <property type="match status" value="1"/>
</dbReference>
<proteinExistence type="evidence at transcript level"/>
<feature type="signal peptide" evidence="2">
    <location>
        <begin position="1"/>
        <end position="21"/>
    </location>
</feature>
<feature type="chain" id="PRO_0000035210" description="Depressant scorpion toxin BmKIM">
    <location>
        <begin position="22"/>
        <end position="82"/>
    </location>
</feature>
<feature type="domain" description="LCN-type CS-alpha/beta" evidence="3">
    <location>
        <begin position="22"/>
        <end position="82"/>
    </location>
</feature>
<feature type="modified residue" description="Glycine amide" evidence="1">
    <location>
        <position position="82"/>
    </location>
</feature>
<feature type="disulfide bond" evidence="3">
    <location>
        <begin position="31"/>
        <end position="81"/>
    </location>
</feature>
<feature type="disulfide bond" evidence="3">
    <location>
        <begin position="35"/>
        <end position="56"/>
    </location>
</feature>
<feature type="disulfide bond" evidence="3">
    <location>
        <begin position="42"/>
        <end position="63"/>
    </location>
</feature>
<feature type="disulfide bond" evidence="3">
    <location>
        <begin position="46"/>
        <end position="65"/>
    </location>
</feature>
<keyword id="KW-0027">Amidation</keyword>
<keyword id="KW-1015">Disulfide bond</keyword>
<keyword id="KW-0872">Ion channel impairing toxin</keyword>
<keyword id="KW-0528">Neurotoxin</keyword>
<keyword id="KW-0964">Secreted</keyword>
<keyword id="KW-0732">Signal</keyword>
<keyword id="KW-0800">Toxin</keyword>
<keyword id="KW-0738">Voltage-gated sodium channel impairing toxin</keyword>
<protein>
    <recommendedName>
        <fullName>Depressant scorpion toxin BmKIM</fullName>
    </recommendedName>
</protein>
<reference key="1">
    <citation type="journal article" date="2002" name="Eur. J. Biochem.">
        <title>Molecular cloning and functional expression of a gene encoding an antiarrhythmia peptide derived from the scorpion toxin.</title>
        <authorList>
            <person name="Peng F."/>
            <person name="Zeng X.-C."/>
            <person name="He X.-H."/>
            <person name="Pu J."/>
            <person name="Li W.-X."/>
            <person name="Zhu Z.-H."/>
            <person name="Liu H."/>
        </authorList>
    </citation>
    <scope>NUCLEOTIDE SEQUENCE [GENOMIC DNA / MRNA]</scope>
    <scope>TOXIC DOSE</scope>
    <scope>SYNTHESIS OF 22-82</scope>
</reference>
<comment type="function">
    <text>Causes a slow progressive depressant flaccid paralysis, when injected into S.falculata blowfly larvae. Inhibits dose-dependently the total sodium (Nav) currents both in dorsal root ganglia neurons and in ventricular myocytes. Is toxic to mice by intravenous injection, but not by subcutaneous or intracerebroventricular injection. Produces antiarrhythmia in rat. Is then active on both mammals and insects.</text>
</comment>
<comment type="subcellular location">
    <subcellularLocation>
        <location evidence="1">Secreted</location>
    </subcellularLocation>
</comment>
<comment type="tissue specificity">
    <text>Expressed by the venom gland.</text>
</comment>
<comment type="domain">
    <text evidence="5">Has the structural arrangement of an alpha-helix connected to antiparallel beta-sheets by disulfide bonds (CS-alpha/beta).</text>
</comment>
<comment type="toxic dose">
    <text evidence="4">LD(50) is 0.8 mg/kg by intravenous injection into mice.</text>
</comment>
<comment type="similarity">
    <text evidence="5">Belongs to the long (4 C-C) scorpion toxin superfamily. Sodium channel inhibitor family.</text>
</comment>
<comment type="caution">
    <text evidence="5">PubMed:12230558 uses only BmKIM as the name, whereas the authors submitted sequences using KIM2 as the name.</text>
</comment>
<name>SIXI_OLIMR</name>
<evidence type="ECO:0000250" key="1"/>
<evidence type="ECO:0000255" key="2"/>
<evidence type="ECO:0000255" key="3">
    <source>
        <dbReference type="PROSITE-ProRule" id="PRU01210"/>
    </source>
</evidence>
<evidence type="ECO:0000269" key="4">
    <source>
    </source>
</evidence>
<evidence type="ECO:0000305" key="5"/>
<sequence length="85" mass="9425">MKLFLLLVFFASMLIDGLVNADGYIRGSNGCKISCLWGNEGCNKECKGFGAYYGYCWTWGLACWCEGLPDDKTWKSESNTCGGKK</sequence>
<organism>
    <name type="scientific">Olivierus martensii</name>
    <name type="common">Manchurian scorpion</name>
    <name type="synonym">Mesobuthus martensii</name>
    <dbReference type="NCBI Taxonomy" id="34649"/>
    <lineage>
        <taxon>Eukaryota</taxon>
        <taxon>Metazoa</taxon>
        <taxon>Ecdysozoa</taxon>
        <taxon>Arthropoda</taxon>
        <taxon>Chelicerata</taxon>
        <taxon>Arachnida</taxon>
        <taxon>Scorpiones</taxon>
        <taxon>Buthida</taxon>
        <taxon>Buthoidea</taxon>
        <taxon>Buthidae</taxon>
        <taxon>Olivierus</taxon>
    </lineage>
</organism>